<sequence length="186" mass="20400">MENNNNNHQQPPKDNEQLKSFWSKGMEGDLNVKNHEFPISRIKRIMKFDPDVSMIAAEAPNLLSKACEMFVMDLTMRSWLHAQESNRLTIRKSDVDAVVSQTVIFDFLRDDVPKDEGEPVVAAADPVDDVADHVAVPDLNNEELPPGTVIGTPVCYGLGIHAPHPQMPGAWTEEDATGANGGNGGN</sequence>
<evidence type="ECO:0000250" key="1"/>
<evidence type="ECO:0000256" key="2">
    <source>
        <dbReference type="SAM" id="MobiDB-lite"/>
    </source>
</evidence>
<evidence type="ECO:0000269" key="3">
    <source>
    </source>
</evidence>
<evidence type="ECO:0000305" key="4"/>
<proteinExistence type="evidence at transcript level"/>
<gene>
    <name type="primary">NFYC5</name>
    <name type="ordered locus">At5g50490</name>
    <name type="ORF">MBA10.4</name>
</gene>
<organism>
    <name type="scientific">Arabidopsis thaliana</name>
    <name type="common">Mouse-ear cress</name>
    <dbReference type="NCBI Taxonomy" id="3702"/>
    <lineage>
        <taxon>Eukaryota</taxon>
        <taxon>Viridiplantae</taxon>
        <taxon>Streptophyta</taxon>
        <taxon>Embryophyta</taxon>
        <taxon>Tracheophyta</taxon>
        <taxon>Spermatophyta</taxon>
        <taxon>Magnoliopsida</taxon>
        <taxon>eudicotyledons</taxon>
        <taxon>Gunneridae</taxon>
        <taxon>Pentapetalae</taxon>
        <taxon>rosids</taxon>
        <taxon>malvids</taxon>
        <taxon>Brassicales</taxon>
        <taxon>Brassicaceae</taxon>
        <taxon>Camelineae</taxon>
        <taxon>Arabidopsis</taxon>
    </lineage>
</organism>
<name>NFYC5_ARATH</name>
<keyword id="KW-0010">Activator</keyword>
<keyword id="KW-0238">DNA-binding</keyword>
<keyword id="KW-0539">Nucleus</keyword>
<keyword id="KW-1185">Reference proteome</keyword>
<keyword id="KW-0804">Transcription</keyword>
<keyword id="KW-0805">Transcription regulation</keyword>
<reference key="1">
    <citation type="submission" date="1999-04" db="EMBL/GenBank/DDBJ databases">
        <title>Structural analysis of Arabidopsis thaliana chromosome 5. XI.</title>
        <authorList>
            <person name="Kaneko T."/>
            <person name="Katoh T."/>
            <person name="Asamizu E."/>
            <person name="Sato S."/>
            <person name="Nakamura Y."/>
            <person name="Kotani H."/>
            <person name="Tabata S."/>
        </authorList>
    </citation>
    <scope>NUCLEOTIDE SEQUENCE [LARGE SCALE GENOMIC DNA]</scope>
    <source>
        <strain>cv. Columbia</strain>
    </source>
</reference>
<reference key="2">
    <citation type="journal article" date="2017" name="Plant J.">
        <title>Araport11: a complete reannotation of the Arabidopsis thaliana reference genome.</title>
        <authorList>
            <person name="Cheng C.Y."/>
            <person name="Krishnakumar V."/>
            <person name="Chan A.P."/>
            <person name="Thibaud-Nissen F."/>
            <person name="Schobel S."/>
            <person name="Town C.D."/>
        </authorList>
    </citation>
    <scope>GENOME REANNOTATION</scope>
    <source>
        <strain>cv. Columbia</strain>
    </source>
</reference>
<reference key="3">
    <citation type="journal article" date="2004" name="Genome Res.">
        <title>Whole genome sequence comparisons and 'full-length' cDNA sequences: a combined approach to evaluate and improve Arabidopsis genome annotation.</title>
        <authorList>
            <person name="Castelli V."/>
            <person name="Aury J.-M."/>
            <person name="Jaillon O."/>
            <person name="Wincker P."/>
            <person name="Clepet C."/>
            <person name="Menard M."/>
            <person name="Cruaud C."/>
            <person name="Quetier F."/>
            <person name="Scarpelli C."/>
            <person name="Schaechter V."/>
            <person name="Temple G."/>
            <person name="Caboche M."/>
            <person name="Weissenbach J."/>
            <person name="Salanoubat M."/>
        </authorList>
    </citation>
    <scope>NUCLEOTIDE SEQUENCE [LARGE SCALE MRNA]</scope>
    <source>
        <strain>cv. Columbia</strain>
    </source>
</reference>
<reference key="4">
    <citation type="journal article" date="2001" name="Gene">
        <title>Regulation of the CCAAT-binding NF-Y subunits in Arabidopsis thaliana.</title>
        <authorList>
            <person name="Gusmaroli G."/>
            <person name="Tonelli C."/>
            <person name="Mantovani R."/>
        </authorList>
    </citation>
    <scope>TISSUE SPECIFICITY</scope>
</reference>
<reference key="5">
    <citation type="journal article" date="2002" name="Gene">
        <title>Regulation of novel members of the Arabidopsis thaliana CCAAT-binding nuclear factor Y subunits.</title>
        <authorList>
            <person name="Gusmaroli G."/>
            <person name="Tonelli C."/>
            <person name="Mantovani R."/>
        </authorList>
    </citation>
    <scope>GENE FAMILY</scope>
    <scope>NOMENCLATURE</scope>
</reference>
<dbReference type="EMBL" id="AB025619">
    <property type="protein sequence ID" value="BAB09134.1"/>
    <property type="molecule type" value="Genomic_DNA"/>
</dbReference>
<dbReference type="EMBL" id="CP002688">
    <property type="protein sequence ID" value="AED95951.1"/>
    <property type="molecule type" value="Genomic_DNA"/>
</dbReference>
<dbReference type="EMBL" id="BX833977">
    <property type="status" value="NOT_ANNOTATED_CDS"/>
    <property type="molecule type" value="mRNA"/>
</dbReference>
<dbReference type="RefSeq" id="NP_199860.1">
    <property type="nucleotide sequence ID" value="NM_124431.3"/>
</dbReference>
<dbReference type="SMR" id="Q9FGP6"/>
<dbReference type="BioGRID" id="20363">
    <property type="interactions" value="13"/>
</dbReference>
<dbReference type="FunCoup" id="Q9FGP6">
    <property type="interactions" value="114"/>
</dbReference>
<dbReference type="IntAct" id="Q9FGP6">
    <property type="interactions" value="2"/>
</dbReference>
<dbReference type="STRING" id="3702.Q9FGP6"/>
<dbReference type="iPTMnet" id="Q9FGP6"/>
<dbReference type="PaxDb" id="3702-AT5G50490.1"/>
<dbReference type="EnsemblPlants" id="AT5G50490.1">
    <property type="protein sequence ID" value="AT5G50490.1"/>
    <property type="gene ID" value="AT5G50490"/>
</dbReference>
<dbReference type="GeneID" id="835117"/>
<dbReference type="Gramene" id="AT5G50490.1">
    <property type="protein sequence ID" value="AT5G50490.1"/>
    <property type="gene ID" value="AT5G50490"/>
</dbReference>
<dbReference type="KEGG" id="ath:AT5G50490"/>
<dbReference type="Araport" id="AT5G50490"/>
<dbReference type="TAIR" id="AT5G50490">
    <property type="gene designation" value="NF-YC5"/>
</dbReference>
<dbReference type="eggNOG" id="KOG1657">
    <property type="taxonomic scope" value="Eukaryota"/>
</dbReference>
<dbReference type="HOGENOM" id="CLU_045277_0_2_1"/>
<dbReference type="InParanoid" id="Q9FGP6"/>
<dbReference type="OMA" id="NHEFPIT"/>
<dbReference type="PhylomeDB" id="Q9FGP6"/>
<dbReference type="PRO" id="PR:Q9FGP6"/>
<dbReference type="Proteomes" id="UP000006548">
    <property type="component" value="Chromosome 5"/>
</dbReference>
<dbReference type="ExpressionAtlas" id="Q9FGP6">
    <property type="expression patterns" value="baseline"/>
</dbReference>
<dbReference type="GO" id="GO:0005634">
    <property type="term" value="C:nucleus"/>
    <property type="evidence" value="ECO:0007669"/>
    <property type="project" value="UniProtKB-SubCell"/>
</dbReference>
<dbReference type="GO" id="GO:0003677">
    <property type="term" value="F:DNA binding"/>
    <property type="evidence" value="ECO:0007669"/>
    <property type="project" value="UniProtKB-KW"/>
</dbReference>
<dbReference type="GO" id="GO:0003700">
    <property type="term" value="F:DNA-binding transcription factor activity"/>
    <property type="evidence" value="ECO:0000250"/>
    <property type="project" value="TAIR"/>
</dbReference>
<dbReference type="GO" id="GO:0046982">
    <property type="term" value="F:protein heterodimerization activity"/>
    <property type="evidence" value="ECO:0007669"/>
    <property type="project" value="InterPro"/>
</dbReference>
<dbReference type="CDD" id="cd22908">
    <property type="entry name" value="HFD_NFYC-like"/>
    <property type="match status" value="1"/>
</dbReference>
<dbReference type="FunFam" id="1.10.20.10:FF:000062">
    <property type="entry name" value="Nuclear transcription factor Y subunit C"/>
    <property type="match status" value="1"/>
</dbReference>
<dbReference type="Gene3D" id="1.10.20.10">
    <property type="entry name" value="Histone, subunit A"/>
    <property type="match status" value="1"/>
</dbReference>
<dbReference type="InterPro" id="IPR003958">
    <property type="entry name" value="CBFA_NFYB_domain"/>
</dbReference>
<dbReference type="InterPro" id="IPR009072">
    <property type="entry name" value="Histone-fold"/>
</dbReference>
<dbReference type="InterPro" id="IPR050568">
    <property type="entry name" value="Transcr_DNA_Rep_Reg"/>
</dbReference>
<dbReference type="PANTHER" id="PTHR10252">
    <property type="entry name" value="HISTONE-LIKE TRANSCRIPTION FACTOR CCAAT-RELATED"/>
    <property type="match status" value="1"/>
</dbReference>
<dbReference type="PANTHER" id="PTHR10252:SF133">
    <property type="entry name" value="NUCLEAR TRANSCRIPTION FACTOR Y SUBUNIT C-1-RELATED"/>
    <property type="match status" value="1"/>
</dbReference>
<dbReference type="Pfam" id="PF00808">
    <property type="entry name" value="CBFD_NFYB_HMF"/>
    <property type="match status" value="1"/>
</dbReference>
<dbReference type="SUPFAM" id="SSF47113">
    <property type="entry name" value="Histone-fold"/>
    <property type="match status" value="1"/>
</dbReference>
<feature type="chain" id="PRO_0000218254" description="Nuclear transcription factor Y subunit C-5">
    <location>
        <begin position="1"/>
        <end position="186"/>
    </location>
</feature>
<feature type="region of interest" description="Disordered" evidence="2">
    <location>
        <begin position="166"/>
        <end position="186"/>
    </location>
</feature>
<feature type="sequence conflict" description="In Ref. 3; BX833977." evidence="4" ref="3">
    <original>D</original>
    <variation>E</variation>
    <location>
        <position position="14"/>
    </location>
</feature>
<feature type="sequence conflict" description="In Ref. 3; BX833977." evidence="4" ref="3">
    <original>I</original>
    <variation>M</variation>
    <location>
        <position position="55"/>
    </location>
</feature>
<feature type="sequence conflict" description="In Ref. 3; BX833977." evidence="4" ref="3">
    <original>E</original>
    <variation>K</variation>
    <location>
        <position position="84"/>
    </location>
</feature>
<feature type="sequence conflict" description="In Ref. 3; BX833977." evidence="4" ref="3">
    <original>I</original>
    <variation>K</variation>
    <location>
        <position position="160"/>
    </location>
</feature>
<comment type="function">
    <text evidence="1">Stimulates the transcription of various genes by recognizing and binding to a CCAAT motif in promoters.</text>
</comment>
<comment type="subunit">
    <text evidence="1">Heterotrimeric transcription factor composed of three components, NF-YA, NF-YB and NF-YC. NF-YB and NF-YC must interact and dimerize for NF-YA association and DNA binding (By similarity).</text>
</comment>
<comment type="subcellular location">
    <subcellularLocation>
        <location evidence="1">Nucleus</location>
    </subcellularLocation>
</comment>
<comment type="tissue specificity">
    <text evidence="3">Expressed in inflorescences and flowers.</text>
</comment>
<comment type="similarity">
    <text evidence="4">Belongs to the NFYC/HAP5 subunit family.</text>
</comment>
<accession>Q9FGP6</accession>
<protein>
    <recommendedName>
        <fullName>Nuclear transcription factor Y subunit C-5</fullName>
        <shortName>AtNF-YC-5</shortName>
    </recommendedName>
</protein>